<proteinExistence type="inferred from homology"/>
<reference key="1">
    <citation type="journal article" date="2008" name="PLoS ONE">
        <title>Genome sequence of the saprophyte Leptospira biflexa provides insights into the evolution of Leptospira and the pathogenesis of leptospirosis.</title>
        <authorList>
            <person name="Picardeau M."/>
            <person name="Bulach D.M."/>
            <person name="Bouchier C."/>
            <person name="Zuerner R.L."/>
            <person name="Zidane N."/>
            <person name="Wilson P.J."/>
            <person name="Creno S."/>
            <person name="Kuczek E.S."/>
            <person name="Bommezzadri S."/>
            <person name="Davis J.C."/>
            <person name="McGrath A."/>
            <person name="Johnson M.J."/>
            <person name="Boursaux-Eude C."/>
            <person name="Seemann T."/>
            <person name="Rouy Z."/>
            <person name="Coppel R.L."/>
            <person name="Rood J.I."/>
            <person name="Lajus A."/>
            <person name="Davies J.K."/>
            <person name="Medigue C."/>
            <person name="Adler B."/>
        </authorList>
    </citation>
    <scope>NUCLEOTIDE SEQUENCE [LARGE SCALE GENOMIC DNA]</scope>
    <source>
        <strain>Patoc 1 / Ames</strain>
    </source>
</reference>
<accession>B0SHK4</accession>
<protein>
    <recommendedName>
        <fullName evidence="1">Argininosuccinate lyase</fullName>
        <shortName evidence="1">ASAL</shortName>
        <ecNumber evidence="1">4.3.2.1</ecNumber>
    </recommendedName>
    <alternativeName>
        <fullName evidence="1">Arginosuccinase</fullName>
    </alternativeName>
</protein>
<evidence type="ECO:0000255" key="1">
    <source>
        <dbReference type="HAMAP-Rule" id="MF_00006"/>
    </source>
</evidence>
<name>ARLY_LEPBA</name>
<keyword id="KW-0028">Amino-acid biosynthesis</keyword>
<keyword id="KW-0055">Arginine biosynthesis</keyword>
<keyword id="KW-0963">Cytoplasm</keyword>
<keyword id="KW-0456">Lyase</keyword>
<organism>
    <name type="scientific">Leptospira biflexa serovar Patoc (strain Patoc 1 / Ames)</name>
    <dbReference type="NCBI Taxonomy" id="355278"/>
    <lineage>
        <taxon>Bacteria</taxon>
        <taxon>Pseudomonadati</taxon>
        <taxon>Spirochaetota</taxon>
        <taxon>Spirochaetia</taxon>
        <taxon>Leptospirales</taxon>
        <taxon>Leptospiraceae</taxon>
        <taxon>Leptospira</taxon>
    </lineage>
</organism>
<gene>
    <name evidence="1" type="primary">argH</name>
    <name type="ordered locus">LBF_1555</name>
</gene>
<feature type="chain" id="PRO_0000335827" description="Argininosuccinate lyase">
    <location>
        <begin position="1"/>
        <end position="478"/>
    </location>
</feature>
<sequence length="478" mass="54370">MKEKKLWGGRFDAAPSSLMIRIGESISFDQELYRHDIEGSISHSRMLRRIGILSESEQRKIETGLGQIKKEIDSGKFEFKIENEDIHMSIESRLTELLGDLGKKLHTGRSRNDQVSQDVRLYIKSEMHSILILVYDLLTVWLKKAEAHTKTIIPGYTHLQIAQPIRASHYFLSHFWANVRDFEDFYSAFERADELVLGSGALAGVNYETDREYLRKDLNLARMSENSMDAVSQRDHIFKFLFASSQFMVHASRFCEEIILYTSQEFSYFKLPDHLTTGSSIMPQKKNPDVAELIRGKAGRVIGNLTHLLVMLKGTPLSYNRDFQEDKIPLFDTVKQIKICTEGIRDMVEGIQIFPENATRSLRNGFSTATDLADWLVSAKGIPFRSAHEIVGELVKHCSMKGYDLFTIPSGERGQIHAVLTDPGYEAAISLETSCDKKDVFGGTALPRQKEQIKRAKAKLNELTKKLKQIESKGKKTI</sequence>
<dbReference type="EC" id="4.3.2.1" evidence="1"/>
<dbReference type="EMBL" id="CP000777">
    <property type="protein sequence ID" value="ABZ94065.1"/>
    <property type="molecule type" value="Genomic_DNA"/>
</dbReference>
<dbReference type="RefSeq" id="WP_012388591.1">
    <property type="nucleotide sequence ID" value="NC_010842.1"/>
</dbReference>
<dbReference type="SMR" id="B0SHK4"/>
<dbReference type="KEGG" id="lbf:LBF_1555"/>
<dbReference type="HOGENOM" id="CLU_027272_2_3_12"/>
<dbReference type="UniPathway" id="UPA00068">
    <property type="reaction ID" value="UER00114"/>
</dbReference>
<dbReference type="GO" id="GO:0005829">
    <property type="term" value="C:cytosol"/>
    <property type="evidence" value="ECO:0007669"/>
    <property type="project" value="TreeGrafter"/>
</dbReference>
<dbReference type="GO" id="GO:0004056">
    <property type="term" value="F:argininosuccinate lyase activity"/>
    <property type="evidence" value="ECO:0007669"/>
    <property type="project" value="UniProtKB-UniRule"/>
</dbReference>
<dbReference type="GO" id="GO:0042450">
    <property type="term" value="P:arginine biosynthetic process via ornithine"/>
    <property type="evidence" value="ECO:0007669"/>
    <property type="project" value="InterPro"/>
</dbReference>
<dbReference type="GO" id="GO:0006526">
    <property type="term" value="P:L-arginine biosynthetic process"/>
    <property type="evidence" value="ECO:0007669"/>
    <property type="project" value="UniProtKB-UniRule"/>
</dbReference>
<dbReference type="CDD" id="cd01359">
    <property type="entry name" value="Argininosuccinate_lyase"/>
    <property type="match status" value="1"/>
</dbReference>
<dbReference type="FunFam" id="1.10.275.10:FF:000002">
    <property type="entry name" value="Argininosuccinate lyase"/>
    <property type="match status" value="1"/>
</dbReference>
<dbReference type="FunFam" id="1.20.200.10:FF:000015">
    <property type="entry name" value="argininosuccinate lyase isoform X2"/>
    <property type="match status" value="1"/>
</dbReference>
<dbReference type="Gene3D" id="1.10.40.30">
    <property type="entry name" value="Fumarase/aspartase (C-terminal domain)"/>
    <property type="match status" value="1"/>
</dbReference>
<dbReference type="Gene3D" id="1.20.200.10">
    <property type="entry name" value="Fumarase/aspartase (Central domain)"/>
    <property type="match status" value="1"/>
</dbReference>
<dbReference type="Gene3D" id="1.10.275.10">
    <property type="entry name" value="Fumarase/aspartase (N-terminal domain)"/>
    <property type="match status" value="1"/>
</dbReference>
<dbReference type="HAMAP" id="MF_00006">
    <property type="entry name" value="Arg_succ_lyase"/>
    <property type="match status" value="1"/>
</dbReference>
<dbReference type="InterPro" id="IPR029419">
    <property type="entry name" value="Arg_succ_lyase_C"/>
</dbReference>
<dbReference type="InterPro" id="IPR009049">
    <property type="entry name" value="Argininosuccinate_lyase"/>
</dbReference>
<dbReference type="InterPro" id="IPR024083">
    <property type="entry name" value="Fumarase/histidase_N"/>
</dbReference>
<dbReference type="InterPro" id="IPR020557">
    <property type="entry name" value="Fumarate_lyase_CS"/>
</dbReference>
<dbReference type="InterPro" id="IPR000362">
    <property type="entry name" value="Fumarate_lyase_fam"/>
</dbReference>
<dbReference type="InterPro" id="IPR022761">
    <property type="entry name" value="Fumarate_lyase_N"/>
</dbReference>
<dbReference type="InterPro" id="IPR008948">
    <property type="entry name" value="L-Aspartase-like"/>
</dbReference>
<dbReference type="NCBIfam" id="TIGR00838">
    <property type="entry name" value="argH"/>
    <property type="match status" value="1"/>
</dbReference>
<dbReference type="PANTHER" id="PTHR43814">
    <property type="entry name" value="ARGININOSUCCINATE LYASE"/>
    <property type="match status" value="1"/>
</dbReference>
<dbReference type="PANTHER" id="PTHR43814:SF1">
    <property type="entry name" value="ARGININOSUCCINATE LYASE"/>
    <property type="match status" value="1"/>
</dbReference>
<dbReference type="Pfam" id="PF14698">
    <property type="entry name" value="ASL_C2"/>
    <property type="match status" value="1"/>
</dbReference>
<dbReference type="Pfam" id="PF00206">
    <property type="entry name" value="Lyase_1"/>
    <property type="match status" value="1"/>
</dbReference>
<dbReference type="PRINTS" id="PR00145">
    <property type="entry name" value="ARGSUCLYASE"/>
</dbReference>
<dbReference type="PRINTS" id="PR00149">
    <property type="entry name" value="FUMRATELYASE"/>
</dbReference>
<dbReference type="SUPFAM" id="SSF48557">
    <property type="entry name" value="L-aspartase-like"/>
    <property type="match status" value="1"/>
</dbReference>
<dbReference type="PROSITE" id="PS00163">
    <property type="entry name" value="FUMARATE_LYASES"/>
    <property type="match status" value="1"/>
</dbReference>
<comment type="catalytic activity">
    <reaction evidence="1">
        <text>2-(N(omega)-L-arginino)succinate = fumarate + L-arginine</text>
        <dbReference type="Rhea" id="RHEA:24020"/>
        <dbReference type="ChEBI" id="CHEBI:29806"/>
        <dbReference type="ChEBI" id="CHEBI:32682"/>
        <dbReference type="ChEBI" id="CHEBI:57472"/>
        <dbReference type="EC" id="4.3.2.1"/>
    </reaction>
</comment>
<comment type="pathway">
    <text evidence="1">Amino-acid biosynthesis; L-arginine biosynthesis; L-arginine from L-ornithine and carbamoyl phosphate: step 3/3.</text>
</comment>
<comment type="subcellular location">
    <subcellularLocation>
        <location evidence="1">Cytoplasm</location>
    </subcellularLocation>
</comment>
<comment type="similarity">
    <text evidence="1">Belongs to the lyase 1 family. Argininosuccinate lyase subfamily.</text>
</comment>